<dbReference type="EC" id="2.1.1.-" evidence="1"/>
<dbReference type="EMBL" id="CP001104">
    <property type="protein sequence ID" value="ACR72163.1"/>
    <property type="molecule type" value="Genomic_DNA"/>
</dbReference>
<dbReference type="RefSeq" id="WP_012739398.1">
    <property type="nucleotide sequence ID" value="NC_012778.1"/>
</dbReference>
<dbReference type="SMR" id="C4Z0Q0"/>
<dbReference type="STRING" id="515620.EUBELI_01163"/>
<dbReference type="GeneID" id="41355887"/>
<dbReference type="KEGG" id="eel:EUBELI_01163"/>
<dbReference type="eggNOG" id="COG2264">
    <property type="taxonomic scope" value="Bacteria"/>
</dbReference>
<dbReference type="HOGENOM" id="CLU_049382_0_1_9"/>
<dbReference type="Proteomes" id="UP000001476">
    <property type="component" value="Chromosome"/>
</dbReference>
<dbReference type="GO" id="GO:0005737">
    <property type="term" value="C:cytoplasm"/>
    <property type="evidence" value="ECO:0007669"/>
    <property type="project" value="UniProtKB-SubCell"/>
</dbReference>
<dbReference type="GO" id="GO:0016279">
    <property type="term" value="F:protein-lysine N-methyltransferase activity"/>
    <property type="evidence" value="ECO:0007669"/>
    <property type="project" value="RHEA"/>
</dbReference>
<dbReference type="GO" id="GO:0032259">
    <property type="term" value="P:methylation"/>
    <property type="evidence" value="ECO:0007669"/>
    <property type="project" value="UniProtKB-KW"/>
</dbReference>
<dbReference type="CDD" id="cd02440">
    <property type="entry name" value="AdoMet_MTases"/>
    <property type="match status" value="1"/>
</dbReference>
<dbReference type="Gene3D" id="3.40.50.150">
    <property type="entry name" value="Vaccinia Virus protein VP39"/>
    <property type="match status" value="1"/>
</dbReference>
<dbReference type="HAMAP" id="MF_00735">
    <property type="entry name" value="Methyltr_PrmA"/>
    <property type="match status" value="1"/>
</dbReference>
<dbReference type="InterPro" id="IPR050078">
    <property type="entry name" value="Ribosomal_L11_MeTrfase_PrmA"/>
</dbReference>
<dbReference type="InterPro" id="IPR004498">
    <property type="entry name" value="Ribosomal_PrmA_MeTrfase"/>
</dbReference>
<dbReference type="InterPro" id="IPR029063">
    <property type="entry name" value="SAM-dependent_MTases_sf"/>
</dbReference>
<dbReference type="NCBIfam" id="TIGR00406">
    <property type="entry name" value="prmA"/>
    <property type="match status" value="1"/>
</dbReference>
<dbReference type="PANTHER" id="PTHR43648">
    <property type="entry name" value="ELECTRON TRANSFER FLAVOPROTEIN BETA SUBUNIT LYSINE METHYLTRANSFERASE"/>
    <property type="match status" value="1"/>
</dbReference>
<dbReference type="PANTHER" id="PTHR43648:SF1">
    <property type="entry name" value="ELECTRON TRANSFER FLAVOPROTEIN BETA SUBUNIT LYSINE METHYLTRANSFERASE"/>
    <property type="match status" value="1"/>
</dbReference>
<dbReference type="Pfam" id="PF06325">
    <property type="entry name" value="PrmA"/>
    <property type="match status" value="1"/>
</dbReference>
<dbReference type="PIRSF" id="PIRSF000401">
    <property type="entry name" value="RPL11_MTase"/>
    <property type="match status" value="1"/>
</dbReference>
<dbReference type="SUPFAM" id="SSF53335">
    <property type="entry name" value="S-adenosyl-L-methionine-dependent methyltransferases"/>
    <property type="match status" value="1"/>
</dbReference>
<comment type="function">
    <text evidence="1">Methylates ribosomal protein L11.</text>
</comment>
<comment type="catalytic activity">
    <reaction evidence="1">
        <text>L-lysyl-[protein] + 3 S-adenosyl-L-methionine = N(6),N(6),N(6)-trimethyl-L-lysyl-[protein] + 3 S-adenosyl-L-homocysteine + 3 H(+)</text>
        <dbReference type="Rhea" id="RHEA:54192"/>
        <dbReference type="Rhea" id="RHEA-COMP:9752"/>
        <dbReference type="Rhea" id="RHEA-COMP:13826"/>
        <dbReference type="ChEBI" id="CHEBI:15378"/>
        <dbReference type="ChEBI" id="CHEBI:29969"/>
        <dbReference type="ChEBI" id="CHEBI:57856"/>
        <dbReference type="ChEBI" id="CHEBI:59789"/>
        <dbReference type="ChEBI" id="CHEBI:61961"/>
    </reaction>
</comment>
<comment type="subcellular location">
    <subcellularLocation>
        <location evidence="1">Cytoplasm</location>
    </subcellularLocation>
</comment>
<comment type="similarity">
    <text evidence="1">Belongs to the methyltransferase superfamily. PrmA family.</text>
</comment>
<gene>
    <name evidence="1" type="primary">prmA</name>
    <name type="ordered locus">EUBELI_01163</name>
</gene>
<evidence type="ECO:0000255" key="1">
    <source>
        <dbReference type="HAMAP-Rule" id="MF_00735"/>
    </source>
</evidence>
<name>PRMA_LACE2</name>
<reference key="1">
    <citation type="journal article" date="2009" name="Proc. Natl. Acad. Sci. U.S.A.">
        <title>Characterizing a model human gut microbiota composed of members of its two dominant bacterial phyla.</title>
        <authorList>
            <person name="Mahowald M.A."/>
            <person name="Rey F.E."/>
            <person name="Seedorf H."/>
            <person name="Turnbaugh P.J."/>
            <person name="Fulton R.S."/>
            <person name="Wollam A."/>
            <person name="Shah N."/>
            <person name="Wang C."/>
            <person name="Magrini V."/>
            <person name="Wilson R.K."/>
            <person name="Cantarel B.L."/>
            <person name="Coutinho P.M."/>
            <person name="Henrissat B."/>
            <person name="Crock L.W."/>
            <person name="Russell A."/>
            <person name="Verberkmoes N.C."/>
            <person name="Hettich R.L."/>
            <person name="Gordon J.I."/>
        </authorList>
    </citation>
    <scope>NUCLEOTIDE SEQUENCE [LARGE SCALE GENOMIC DNA]</scope>
    <source>
        <strain>ATCC 27750 / DSM 3376 / VPI C15-48 / C15-B4</strain>
    </source>
</reference>
<keyword id="KW-0963">Cytoplasm</keyword>
<keyword id="KW-0489">Methyltransferase</keyword>
<keyword id="KW-1185">Reference proteome</keyword>
<keyword id="KW-0949">S-adenosyl-L-methionine</keyword>
<keyword id="KW-0808">Transferase</keyword>
<protein>
    <recommendedName>
        <fullName evidence="1">Ribosomal protein L11 methyltransferase</fullName>
        <shortName evidence="1">L11 Mtase</shortName>
        <ecNumber evidence="1">2.1.1.-</ecNumber>
    </recommendedName>
</protein>
<sequence>MKWNKYSIQTTTDAVDMISSALNDIGIEGIEIEDNVQLTKEEAKSMFVDFIPDLPPDDGRAKVNFYIDSEEDDGSMLEKVKAELEDLRMFIDIGEGTITESETEDKDWINNWKQYWHTFTIGDLFIKPTWEPETEEMKGHAVLSIDPGTAFGTGSHETTRMVIKQLQKYVKDGDEVLDVGCGSGILSVVALKYGAKHAFGTDLDPNAIIASEENAEQNNIDKKQLEVIEGNIIDDKAVKDACGYECYDIVCANILADVLEPLSTCIHEHMKHGAYFITSGIIDTKENEVAEAFKKNPELEIVEINHDGEWVNITARRK</sequence>
<accession>C4Z0Q0</accession>
<feature type="chain" id="PRO_1000212748" description="Ribosomal protein L11 methyltransferase">
    <location>
        <begin position="1"/>
        <end position="318"/>
    </location>
</feature>
<feature type="binding site" evidence="1">
    <location>
        <position position="159"/>
    </location>
    <ligand>
        <name>S-adenosyl-L-methionine</name>
        <dbReference type="ChEBI" id="CHEBI:59789"/>
    </ligand>
</feature>
<feature type="binding site" evidence="1">
    <location>
        <position position="180"/>
    </location>
    <ligand>
        <name>S-adenosyl-L-methionine</name>
        <dbReference type="ChEBI" id="CHEBI:59789"/>
    </ligand>
</feature>
<feature type="binding site" evidence="1">
    <location>
        <position position="202"/>
    </location>
    <ligand>
        <name>S-adenosyl-L-methionine</name>
        <dbReference type="ChEBI" id="CHEBI:59789"/>
    </ligand>
</feature>
<feature type="binding site" evidence="1">
    <location>
        <position position="253"/>
    </location>
    <ligand>
        <name>S-adenosyl-L-methionine</name>
        <dbReference type="ChEBI" id="CHEBI:59789"/>
    </ligand>
</feature>
<organism>
    <name type="scientific">Lachnospira eligens (strain ATCC 27750 / DSM 3376 / VPI C15-48 / C15-B4)</name>
    <name type="common">Eubacterium eligens</name>
    <dbReference type="NCBI Taxonomy" id="515620"/>
    <lineage>
        <taxon>Bacteria</taxon>
        <taxon>Bacillati</taxon>
        <taxon>Bacillota</taxon>
        <taxon>Clostridia</taxon>
        <taxon>Lachnospirales</taxon>
        <taxon>Lachnospiraceae</taxon>
        <taxon>Lachnospira</taxon>
    </lineage>
</organism>
<proteinExistence type="inferred from homology"/>